<name>AB41G_ORYSJ</name>
<organism>
    <name type="scientific">Oryza sativa subsp. japonica</name>
    <name type="common">Rice</name>
    <dbReference type="NCBI Taxonomy" id="39947"/>
    <lineage>
        <taxon>Eukaryota</taxon>
        <taxon>Viridiplantae</taxon>
        <taxon>Streptophyta</taxon>
        <taxon>Embryophyta</taxon>
        <taxon>Tracheophyta</taxon>
        <taxon>Spermatophyta</taxon>
        <taxon>Magnoliopsida</taxon>
        <taxon>Liliopsida</taxon>
        <taxon>Poales</taxon>
        <taxon>Poaceae</taxon>
        <taxon>BOP clade</taxon>
        <taxon>Oryzoideae</taxon>
        <taxon>Oryzeae</taxon>
        <taxon>Oryzinae</taxon>
        <taxon>Oryza</taxon>
        <taxon>Oryza sativa</taxon>
    </lineage>
</organism>
<gene>
    <name evidence="8" type="primary">ABCG41</name>
    <name evidence="6 7" type="synonym">PDR2</name>
    <name evidence="12" type="ordered locus">Os02g0528900</name>
    <name type="ordered locus">LOC_Os02g32690</name>
    <name evidence="11" type="ORF">P0475F05.27</name>
    <name evidence="10" type="ORF">P0476H10.11</name>
</gene>
<sequence>MEDKKQQQQQQREEAEAEEEAPVVPSSLRAAATCRSLSSLSSSLRWDHRGDDDEEEAELRWAAIERLPTLDRMRTSVLSSEAVDVRRLGAAQRRVLVERLVADIQRDNLRLLRKQRRRMERVGVRQPTVEVRWRNVRVEADCQVVSGKPLPTLLNTVLATARGLSRRPHARIPILNDVTGILKPSRLTLLLGPPGCGKTTLLLALAGKLDKNLKVTGEVEYNGANLNTFVPEKTSAYISQYDLHVPEMTVRETLDFSARFQGVGTRAEIMKEVIRREKEAGITPDPDIDTYMKAISVEGLERSMQTDYIMKIMGLDICADIIVGDIMRRGISGGEKKRLTTGEMIVGPSRALFMDEISTGLDSSTTFQIVSCLQQVAHISESTILVSLLQPAPETYDLFDDIILMAEGKIVYHGSKSCIMNFFESCGFKCPERKGAADFLQEVLSKKDQQQYWSRTEETYNFVTIDHFCEKFKASQVGQNLVEELANPFDKSEVYNNALSLNIYSLTKWDLLKACFAREILLMRRNAFIYITKVVQLGLLAVITGTVFLRTHMGVDRAHADYYMGSLFYALILLLVNGFPELAIAVSRLPVFYKQRDYYFYPAWAYAIPSFILKIPLSLVESITWTSISYYLIGYTPEASRFFCQLLILFLVHTGALSLFRCVASYCQTMVASSVGGTMSFLVILLFGGFIIPRLSMPNWLKWGFWISPLSYAEIGLTGNEFLAPRWLKTTTSGVTLGRRVLMDRGLDFSSYFYWISASALIGFILLLNVGYAIGLTIKKPTGTSRAIISRDKFSTFDRRGKDMSKDMDNRMPKLQVGNALAPNKTGTMVLPFSPLTISFQDVNYYVDTPVEMREQGYKERKLQLLHNITGAFQPGVLSALMGVTGAGKTTLLDVLAGRKTGGVIEGDIRVGGYPKIQQTFARISGYCEQTDVHSPQITVEESVAYSAWLRLPTEVDSKTRREFVDEVIQTIELDDIRDALVGLPGVSGLSTEQRKRLTIAVELVSNPSVIFMDEPTSGLDARAAAIVMRAVKNVADTGRTVVCTIHQPSIEIFEAFDELMLMKRGGELIYAGPLGLHSCNVIHYFETIPGVPKIKDNYNPSTWMLEVTCASMEAQLGVDFAQIYRESTMCKDKDALVKSLSKPALGTSDLHFPTRFPQKFREQLKACIWKQCLSYWRSPSYNLVRILFITISCIVFGVLFWQQGDINHINDQQGLFTILGCMYGTTLFTGINNCQSVIPFISIERSVVYRERFAGMYSPWAYSLAQVAMEIPYVLVQILLIMFIAYPMIGYAWTAAKFFWFMYTIACTLLYFLYFGMMIVSLTPNIQVASILASMFYTLQNLMSGFIVPAPQIPRWWIWLYYTSPLSWTLNVFFTTQFGDEHQKEISVFGETKSVAAFIKDYFGFRHDLLPLAAIILAMFPILFAILFGLSISKLNFQRR</sequence>
<reference key="1">
    <citation type="journal article" date="2003" name="Plant Physiol.">
        <title>The ATP-binding cassette transporters: structure, function, and gene family comparison between rice and Arabidopsis.</title>
        <authorList>
            <person name="Jasinski M."/>
            <person name="Ducos E."/>
            <person name="Martinoia E."/>
            <person name="Boutry M."/>
        </authorList>
    </citation>
    <scope>NUCLEOTIDE SEQUENCE [GENOMIC DNA]</scope>
    <source>
        <strain>cv. Nipponbare</strain>
    </source>
</reference>
<reference key="2">
    <citation type="journal article" date="2005" name="Nature">
        <title>The map-based sequence of the rice genome.</title>
        <authorList>
            <consortium name="International rice genome sequencing project (IRGSP)"/>
        </authorList>
    </citation>
    <scope>NUCLEOTIDE SEQUENCE [LARGE SCALE GENOMIC DNA]</scope>
    <source>
        <strain>cv. Nipponbare</strain>
    </source>
</reference>
<reference key="3">
    <citation type="journal article" date="2008" name="Nucleic Acids Res.">
        <title>The rice annotation project database (RAP-DB): 2008 update.</title>
        <authorList>
            <consortium name="The rice annotation project (RAP)"/>
        </authorList>
    </citation>
    <scope>GENOME REANNOTATION</scope>
    <source>
        <strain>cv. Nipponbare</strain>
    </source>
</reference>
<reference key="4">
    <citation type="journal article" date="2013" name="Rice">
        <title>Improvement of the Oryza sativa Nipponbare reference genome using next generation sequence and optical map data.</title>
        <authorList>
            <person name="Kawahara Y."/>
            <person name="de la Bastide M."/>
            <person name="Hamilton J.P."/>
            <person name="Kanamori H."/>
            <person name="McCombie W.R."/>
            <person name="Ouyang S."/>
            <person name="Schwartz D.C."/>
            <person name="Tanaka T."/>
            <person name="Wu J."/>
            <person name="Zhou S."/>
            <person name="Childs K.L."/>
            <person name="Davidson R.M."/>
            <person name="Lin H."/>
            <person name="Quesada-Ocampo L."/>
            <person name="Vaillancourt B."/>
            <person name="Sakai H."/>
            <person name="Lee S.S."/>
            <person name="Kim J."/>
            <person name="Numa H."/>
            <person name="Itoh T."/>
            <person name="Buell C.R."/>
            <person name="Matsumoto T."/>
        </authorList>
    </citation>
    <scope>GENOME REANNOTATION</scope>
    <source>
        <strain>cv. Nipponbare</strain>
    </source>
</reference>
<reference key="5">
    <citation type="journal article" date="2006" name="FEBS Lett.">
        <title>Organization and function of the plant pleiotropic drug resistance ABC transporter family.</title>
        <authorList>
            <person name="Crouzet J."/>
            <person name="Trombik T."/>
            <person name="Fraysse A.S."/>
            <person name="Boutry M."/>
        </authorList>
    </citation>
    <scope>GENE FAMILY</scope>
    <scope>NOMENCLATURE</scope>
</reference>
<reference key="6">
    <citation type="journal article" date="2008" name="Trends Plant Sci.">
        <title>Plant ABC proteins - a unified nomenclature and updated inventory.</title>
        <authorList>
            <person name="Verrier P.J."/>
            <person name="Bird D."/>
            <person name="Burla B."/>
            <person name="Dassa E."/>
            <person name="Forestier C."/>
            <person name="Geisler M."/>
            <person name="Klein M."/>
            <person name="Kolukisaoglu H.U."/>
            <person name="Lee Y."/>
            <person name="Martinoia E."/>
            <person name="Murphy A."/>
            <person name="Rea P.A."/>
            <person name="Samuels L."/>
            <person name="Schulz B."/>
            <person name="Spalding E.J."/>
            <person name="Yazaki K."/>
            <person name="Theodoulou F.L."/>
        </authorList>
    </citation>
    <scope>GENE FAMILY</scope>
    <scope>NOMENCLATURE</scope>
</reference>
<feature type="chain" id="PRO_0000433453" description="ABC transporter G family member 41">
    <location>
        <begin position="1"/>
        <end position="1441"/>
    </location>
</feature>
<feature type="transmembrane region" description="Helical" evidence="2">
    <location>
        <begin position="528"/>
        <end position="548"/>
    </location>
</feature>
<feature type="transmembrane region" description="Helical" evidence="2">
    <location>
        <begin position="566"/>
        <end position="586"/>
    </location>
</feature>
<feature type="transmembrane region" description="Helical" evidence="2">
    <location>
        <begin position="600"/>
        <end position="620"/>
    </location>
</feature>
<feature type="transmembrane region" description="Helical" evidence="2">
    <location>
        <begin position="642"/>
        <end position="662"/>
    </location>
</feature>
<feature type="transmembrane region" description="Helical" evidence="2">
    <location>
        <begin position="672"/>
        <end position="692"/>
    </location>
</feature>
<feature type="transmembrane region" description="Helical" evidence="2">
    <location>
        <begin position="758"/>
        <end position="778"/>
    </location>
</feature>
<feature type="transmembrane region" description="Helical" evidence="2">
    <location>
        <begin position="1187"/>
        <end position="1207"/>
    </location>
</feature>
<feature type="transmembrane region" description="Helical" evidence="2">
    <location>
        <begin position="1215"/>
        <end position="1235"/>
    </location>
</feature>
<feature type="transmembrane region" description="Helical" evidence="2">
    <location>
        <begin position="1272"/>
        <end position="1292"/>
    </location>
</feature>
<feature type="transmembrane region" description="Helical" evidence="2">
    <location>
        <begin position="1300"/>
        <end position="1320"/>
    </location>
</feature>
<feature type="transmembrane region" description="Helical" evidence="2">
    <location>
        <begin position="1329"/>
        <end position="1349"/>
    </location>
</feature>
<feature type="transmembrane region" description="Helical" evidence="2">
    <location>
        <begin position="1357"/>
        <end position="1377"/>
    </location>
</feature>
<feature type="transmembrane region" description="Helical" evidence="2">
    <location>
        <begin position="1413"/>
        <end position="1433"/>
    </location>
</feature>
<feature type="domain" description="ABC transporter 1" evidence="3">
    <location>
        <begin position="159"/>
        <end position="432"/>
    </location>
</feature>
<feature type="domain" description="ABC transmembrane type-2 1" evidence="4">
    <location>
        <begin position="510"/>
        <end position="722"/>
    </location>
</feature>
<feature type="domain" description="ABC transporter 2" evidence="3">
    <location>
        <begin position="838"/>
        <end position="1090"/>
    </location>
</feature>
<feature type="domain" description="ABC transmembrane type-2 2" evidence="4">
    <location>
        <begin position="1163"/>
        <end position="1379"/>
    </location>
</feature>
<feature type="region of interest" description="Disordered" evidence="5">
    <location>
        <begin position="1"/>
        <end position="28"/>
    </location>
</feature>
<feature type="compositionally biased region" description="Basic and acidic residues" evidence="5">
    <location>
        <begin position="1"/>
        <end position="14"/>
    </location>
</feature>
<feature type="binding site" evidence="3">
    <location>
        <begin position="192"/>
        <end position="199"/>
    </location>
    <ligand>
        <name>ATP</name>
        <dbReference type="ChEBI" id="CHEBI:30616"/>
        <label>1</label>
    </ligand>
</feature>
<feature type="binding site" evidence="3">
    <location>
        <begin position="883"/>
        <end position="890"/>
    </location>
    <ligand>
        <name>ATP</name>
        <dbReference type="ChEBI" id="CHEBI:30616"/>
        <label>2</label>
    </ligand>
</feature>
<keyword id="KW-0067">ATP-binding</keyword>
<keyword id="KW-0472">Membrane</keyword>
<keyword id="KW-0547">Nucleotide-binding</keyword>
<keyword id="KW-1185">Reference proteome</keyword>
<keyword id="KW-0677">Repeat</keyword>
<keyword id="KW-0812">Transmembrane</keyword>
<keyword id="KW-1133">Transmembrane helix</keyword>
<keyword id="KW-0813">Transport</keyword>
<comment type="function">
    <text evidence="1">May be a general defense protein.</text>
</comment>
<comment type="subcellular location">
    <subcellularLocation>
        <location evidence="2">Membrane</location>
        <topology evidence="2">Multi-pass membrane protein</topology>
    </subcellularLocation>
</comment>
<comment type="similarity">
    <text evidence="9">Belongs to the ABC transporter superfamily. ABCG family. PDR (TC 3.A.1.205) subfamily.</text>
</comment>
<comment type="sequence caution" evidence="9">
    <conflict type="erroneous gene model prediction">
        <sequence resource="EMBL-CDS" id="BAH91729"/>
    </conflict>
</comment>
<dbReference type="EMBL" id="AJ535053">
    <property type="protein sequence ID" value="CAD59575.1"/>
    <property type="molecule type" value="Genomic_DNA"/>
</dbReference>
<dbReference type="EMBL" id="AP004790">
    <property type="protein sequence ID" value="BAD25425.1"/>
    <property type="molecule type" value="Genomic_DNA"/>
</dbReference>
<dbReference type="EMBL" id="AP004879">
    <property type="protein sequence ID" value="BAD25608.1"/>
    <property type="molecule type" value="Genomic_DNA"/>
</dbReference>
<dbReference type="EMBL" id="AP008208">
    <property type="protein sequence ID" value="BAH91729.1"/>
    <property type="status" value="ALT_SEQ"/>
    <property type="molecule type" value="Genomic_DNA"/>
</dbReference>
<dbReference type="EMBL" id="AP014958">
    <property type="status" value="NOT_ANNOTATED_CDS"/>
    <property type="molecule type" value="Genomic_DNA"/>
</dbReference>
<dbReference type="SMR" id="Q8GU83"/>
<dbReference type="FunCoup" id="Q8GU83">
    <property type="interactions" value="119"/>
</dbReference>
<dbReference type="STRING" id="39947.Q8GU83"/>
<dbReference type="PaxDb" id="39947-Q8GU83"/>
<dbReference type="KEGG" id="dosa:Os02g0528900"/>
<dbReference type="InParanoid" id="Q8GU83"/>
<dbReference type="Proteomes" id="UP000000763">
    <property type="component" value="Chromosome 2"/>
</dbReference>
<dbReference type="Proteomes" id="UP000059680">
    <property type="component" value="Chromosome 2"/>
</dbReference>
<dbReference type="GO" id="GO:0005886">
    <property type="term" value="C:plasma membrane"/>
    <property type="evidence" value="ECO:0007669"/>
    <property type="project" value="UniProtKB-ARBA"/>
</dbReference>
<dbReference type="GO" id="GO:0140359">
    <property type="term" value="F:ABC-type transporter activity"/>
    <property type="evidence" value="ECO:0007669"/>
    <property type="project" value="InterPro"/>
</dbReference>
<dbReference type="GO" id="GO:0005524">
    <property type="term" value="F:ATP binding"/>
    <property type="evidence" value="ECO:0007669"/>
    <property type="project" value="UniProtKB-KW"/>
</dbReference>
<dbReference type="GO" id="GO:0016887">
    <property type="term" value="F:ATP hydrolysis activity"/>
    <property type="evidence" value="ECO:0007669"/>
    <property type="project" value="InterPro"/>
</dbReference>
<dbReference type="CDD" id="cd03232">
    <property type="entry name" value="ABCG_PDR_domain2"/>
    <property type="match status" value="1"/>
</dbReference>
<dbReference type="FunFam" id="3.40.50.300:FF:000157">
    <property type="entry name" value="ABC transporter G family member 34"/>
    <property type="match status" value="1"/>
</dbReference>
<dbReference type="FunFam" id="3.40.50.300:FF:000532">
    <property type="entry name" value="ABC transporter G family member 34"/>
    <property type="match status" value="1"/>
</dbReference>
<dbReference type="Gene3D" id="3.40.50.300">
    <property type="entry name" value="P-loop containing nucleotide triphosphate hydrolases"/>
    <property type="match status" value="2"/>
</dbReference>
<dbReference type="InterPro" id="IPR003593">
    <property type="entry name" value="AAA+_ATPase"/>
</dbReference>
<dbReference type="InterPro" id="IPR013525">
    <property type="entry name" value="ABC2_TM"/>
</dbReference>
<dbReference type="InterPro" id="IPR003439">
    <property type="entry name" value="ABC_transporter-like_ATP-bd"/>
</dbReference>
<dbReference type="InterPro" id="IPR043926">
    <property type="entry name" value="ABCG_dom"/>
</dbReference>
<dbReference type="InterPro" id="IPR034003">
    <property type="entry name" value="ABCG_PDR_2"/>
</dbReference>
<dbReference type="InterPro" id="IPR027417">
    <property type="entry name" value="P-loop_NTPase"/>
</dbReference>
<dbReference type="InterPro" id="IPR013581">
    <property type="entry name" value="PDR_assoc"/>
</dbReference>
<dbReference type="PANTHER" id="PTHR19241">
    <property type="entry name" value="ATP-BINDING CASSETTE TRANSPORTER"/>
    <property type="match status" value="1"/>
</dbReference>
<dbReference type="Pfam" id="PF01061">
    <property type="entry name" value="ABC2_membrane"/>
    <property type="match status" value="2"/>
</dbReference>
<dbReference type="Pfam" id="PF19055">
    <property type="entry name" value="ABC2_membrane_7"/>
    <property type="match status" value="1"/>
</dbReference>
<dbReference type="Pfam" id="PF00005">
    <property type="entry name" value="ABC_tran"/>
    <property type="match status" value="2"/>
</dbReference>
<dbReference type="Pfam" id="PF08370">
    <property type="entry name" value="PDR_assoc"/>
    <property type="match status" value="1"/>
</dbReference>
<dbReference type="SMART" id="SM00382">
    <property type="entry name" value="AAA"/>
    <property type="match status" value="2"/>
</dbReference>
<dbReference type="SUPFAM" id="SSF52540">
    <property type="entry name" value="P-loop containing nucleoside triphosphate hydrolases"/>
    <property type="match status" value="2"/>
</dbReference>
<dbReference type="PROSITE" id="PS50893">
    <property type="entry name" value="ABC_TRANSPORTER_2"/>
    <property type="match status" value="2"/>
</dbReference>
<proteinExistence type="inferred from homology"/>
<accession>Q8GU83</accession>
<accession>C7IY70</accession>
<protein>
    <recommendedName>
        <fullName evidence="8">ABC transporter G family member 41</fullName>
        <shortName evidence="8">OsABCG41</shortName>
    </recommendedName>
    <alternativeName>
        <fullName evidence="6 7">Pleiotropic drug resistance protein 2</fullName>
        <shortName evidence="7">OsPDR2</shortName>
    </alternativeName>
</protein>
<evidence type="ECO:0000250" key="1"/>
<evidence type="ECO:0000255" key="2"/>
<evidence type="ECO:0000255" key="3">
    <source>
        <dbReference type="PROSITE-ProRule" id="PRU00434"/>
    </source>
</evidence>
<evidence type="ECO:0000255" key="4">
    <source>
        <dbReference type="PROSITE-ProRule" id="PRU00442"/>
    </source>
</evidence>
<evidence type="ECO:0000256" key="5">
    <source>
        <dbReference type="SAM" id="MobiDB-lite"/>
    </source>
</evidence>
<evidence type="ECO:0000303" key="6">
    <source>
    </source>
</evidence>
<evidence type="ECO:0000303" key="7">
    <source>
    </source>
</evidence>
<evidence type="ECO:0000303" key="8">
    <source>
    </source>
</evidence>
<evidence type="ECO:0000305" key="9"/>
<evidence type="ECO:0000312" key="10">
    <source>
        <dbReference type="EMBL" id="BAD25425.1"/>
    </source>
</evidence>
<evidence type="ECO:0000312" key="11">
    <source>
        <dbReference type="EMBL" id="BAD25608.1"/>
    </source>
</evidence>
<evidence type="ECO:0000312" key="12">
    <source>
        <dbReference type="EMBL" id="BAH91729.1"/>
    </source>
</evidence>